<proteinExistence type="inferred from homology"/>
<keyword id="KW-0150">Chloroplast</keyword>
<keyword id="KW-0934">Plastid</keyword>
<keyword id="KW-1185">Reference proteome</keyword>
<keyword id="KW-0687">Ribonucleoprotein</keyword>
<keyword id="KW-0689">Ribosomal protein</keyword>
<keyword id="KW-0694">RNA-binding</keyword>
<keyword id="KW-0699">rRNA-binding</keyword>
<evidence type="ECO:0000250" key="1"/>
<evidence type="ECO:0000305" key="2"/>
<organism>
    <name type="scientific">Coffea arabica</name>
    <name type="common">Arabian coffee</name>
    <dbReference type="NCBI Taxonomy" id="13443"/>
    <lineage>
        <taxon>Eukaryota</taxon>
        <taxon>Viridiplantae</taxon>
        <taxon>Streptophyta</taxon>
        <taxon>Embryophyta</taxon>
        <taxon>Tracheophyta</taxon>
        <taxon>Spermatophyta</taxon>
        <taxon>Magnoliopsida</taxon>
        <taxon>eudicotyledons</taxon>
        <taxon>Gunneridae</taxon>
        <taxon>Pentapetalae</taxon>
        <taxon>asterids</taxon>
        <taxon>lamiids</taxon>
        <taxon>Gentianales</taxon>
        <taxon>Rubiaceae</taxon>
        <taxon>Ixoroideae</taxon>
        <taxon>Gardenieae complex</taxon>
        <taxon>Bertiereae - Coffeeae clade</taxon>
        <taxon>Coffeeae</taxon>
        <taxon>Coffea</taxon>
    </lineage>
</organism>
<name>RR8_COFAR</name>
<geneLocation type="chloroplast"/>
<sequence length="134" mass="15587">MGRDTVAEIITSIRNADMDKKRVVRITSTNITENIVKILLREGFIENARKHRENNKYFLVLTLRHRRNRKGPHRNIFNLKRISRPGLRIYANSQRIPRILGGMGIVIFSTSRGIMTDREARLEGIGGEILCYIW</sequence>
<gene>
    <name type="primary">rps8</name>
</gene>
<comment type="function">
    <text evidence="1">One of the primary rRNA binding proteins, it binds directly to 16S rRNA central domain where it helps coordinate assembly of the platform of the 30S subunit.</text>
</comment>
<comment type="subunit">
    <text evidence="1">Part of the 30S ribosomal subunit.</text>
</comment>
<comment type="subcellular location">
    <subcellularLocation>
        <location>Plastid</location>
        <location>Chloroplast</location>
    </subcellularLocation>
</comment>
<comment type="similarity">
    <text evidence="2">Belongs to the universal ribosomal protein uS8 family.</text>
</comment>
<dbReference type="EMBL" id="EF044213">
    <property type="protein sequence ID" value="ABJ89714.1"/>
    <property type="molecule type" value="Genomic_DNA"/>
</dbReference>
<dbReference type="RefSeq" id="YP_817518.1">
    <property type="nucleotide sequence ID" value="NC_008535.1"/>
</dbReference>
<dbReference type="SMR" id="A0A371"/>
<dbReference type="GeneID" id="4421815"/>
<dbReference type="OrthoDB" id="409928at2759"/>
<dbReference type="Proteomes" id="UP000515148">
    <property type="component" value="Chloroplast Pltd"/>
</dbReference>
<dbReference type="GO" id="GO:0009507">
    <property type="term" value="C:chloroplast"/>
    <property type="evidence" value="ECO:0007669"/>
    <property type="project" value="UniProtKB-SubCell"/>
</dbReference>
<dbReference type="GO" id="GO:1990904">
    <property type="term" value="C:ribonucleoprotein complex"/>
    <property type="evidence" value="ECO:0007669"/>
    <property type="project" value="UniProtKB-KW"/>
</dbReference>
<dbReference type="GO" id="GO:0005840">
    <property type="term" value="C:ribosome"/>
    <property type="evidence" value="ECO:0007669"/>
    <property type="project" value="UniProtKB-KW"/>
</dbReference>
<dbReference type="GO" id="GO:0019843">
    <property type="term" value="F:rRNA binding"/>
    <property type="evidence" value="ECO:0007669"/>
    <property type="project" value="UniProtKB-UniRule"/>
</dbReference>
<dbReference type="GO" id="GO:0003735">
    <property type="term" value="F:structural constituent of ribosome"/>
    <property type="evidence" value="ECO:0007669"/>
    <property type="project" value="InterPro"/>
</dbReference>
<dbReference type="GO" id="GO:0006412">
    <property type="term" value="P:translation"/>
    <property type="evidence" value="ECO:0007669"/>
    <property type="project" value="UniProtKB-UniRule"/>
</dbReference>
<dbReference type="FunFam" id="3.30.1490.10:FF:000001">
    <property type="entry name" value="30S ribosomal protein S8"/>
    <property type="match status" value="1"/>
</dbReference>
<dbReference type="FunFam" id="3.30.1370.30:FF:000004">
    <property type="entry name" value="30S ribosomal protein S8, chloroplastic"/>
    <property type="match status" value="1"/>
</dbReference>
<dbReference type="Gene3D" id="3.30.1370.30">
    <property type="match status" value="1"/>
</dbReference>
<dbReference type="Gene3D" id="3.30.1490.10">
    <property type="match status" value="1"/>
</dbReference>
<dbReference type="HAMAP" id="MF_01302_B">
    <property type="entry name" value="Ribosomal_uS8_B"/>
    <property type="match status" value="1"/>
</dbReference>
<dbReference type="InterPro" id="IPR000630">
    <property type="entry name" value="Ribosomal_uS8"/>
</dbReference>
<dbReference type="InterPro" id="IPR035987">
    <property type="entry name" value="Ribosomal_uS8_sf"/>
</dbReference>
<dbReference type="NCBIfam" id="NF001109">
    <property type="entry name" value="PRK00136.1"/>
    <property type="match status" value="1"/>
</dbReference>
<dbReference type="PANTHER" id="PTHR11758">
    <property type="entry name" value="40S RIBOSOMAL PROTEIN S15A"/>
    <property type="match status" value="1"/>
</dbReference>
<dbReference type="Pfam" id="PF00410">
    <property type="entry name" value="Ribosomal_S8"/>
    <property type="match status" value="1"/>
</dbReference>
<dbReference type="SUPFAM" id="SSF56047">
    <property type="entry name" value="Ribosomal protein S8"/>
    <property type="match status" value="1"/>
</dbReference>
<protein>
    <recommendedName>
        <fullName evidence="2">Small ribosomal subunit protein uS8c</fullName>
    </recommendedName>
    <alternativeName>
        <fullName>30S ribosomal protein S8, chloroplastic</fullName>
    </alternativeName>
</protein>
<accession>A0A371</accession>
<reference key="1">
    <citation type="journal article" date="2007" name="Plant Biotechnol. J.">
        <title>The complete nucleotide sequence of the coffee (Coffea arabica L.) chloroplast genome: organization and implications for biotechnology and phylogenetic relationships amongst angiosperms.</title>
        <authorList>
            <person name="Samson N."/>
            <person name="Bausher M.G."/>
            <person name="Lee S.-B."/>
            <person name="Jansen R.K."/>
            <person name="Daniell H."/>
        </authorList>
    </citation>
    <scope>NUCLEOTIDE SEQUENCE [LARGE SCALE GENOMIC DNA]</scope>
</reference>
<feature type="chain" id="PRO_0000276719" description="Small ribosomal subunit protein uS8c">
    <location>
        <begin position="1"/>
        <end position="134"/>
    </location>
</feature>